<feature type="chain" id="PRO_0000332630" description="Ribonuclease H">
    <location>
        <begin position="1"/>
        <end position="151"/>
    </location>
</feature>
<feature type="domain" description="RNase H type-1" evidence="2">
    <location>
        <begin position="1"/>
        <end position="143"/>
    </location>
</feature>
<feature type="binding site" evidence="1">
    <location>
        <position position="10"/>
    </location>
    <ligand>
        <name>Mg(2+)</name>
        <dbReference type="ChEBI" id="CHEBI:18420"/>
        <label>1</label>
    </ligand>
</feature>
<feature type="binding site" evidence="1">
    <location>
        <position position="10"/>
    </location>
    <ligand>
        <name>Mg(2+)</name>
        <dbReference type="ChEBI" id="CHEBI:18420"/>
        <label>2</label>
    </ligand>
</feature>
<feature type="binding site" evidence="1">
    <location>
        <position position="49"/>
    </location>
    <ligand>
        <name>Mg(2+)</name>
        <dbReference type="ChEBI" id="CHEBI:18420"/>
        <label>1</label>
    </ligand>
</feature>
<feature type="binding site" evidence="1">
    <location>
        <position position="71"/>
    </location>
    <ligand>
        <name>Mg(2+)</name>
        <dbReference type="ChEBI" id="CHEBI:18420"/>
        <label>1</label>
    </ligand>
</feature>
<feature type="binding site" evidence="1">
    <location>
        <position position="135"/>
    </location>
    <ligand>
        <name>Mg(2+)</name>
        <dbReference type="ChEBI" id="CHEBI:18420"/>
        <label>2</label>
    </ligand>
</feature>
<accession>A4T6Y5</accession>
<protein>
    <recommendedName>
        <fullName evidence="1">Ribonuclease H</fullName>
        <shortName evidence="1">RNase H</shortName>
        <ecNumber evidence="1">3.1.26.4</ecNumber>
    </recommendedName>
</protein>
<sequence>MSDVVVIHTDGGCRPNPGPGGWGAVLRQRHHVREMCGGEPAQTSNNRMELTAPIMALEALTRPVSVHLYTDSTYVRNGITKWVLGWERNGWMTAAKQPVKNADLWRRLQSACARHEVEWFWVKGHSGVADNELADVLATRGLQEALAASVV</sequence>
<dbReference type="EC" id="3.1.26.4" evidence="1"/>
<dbReference type="EMBL" id="CP000656">
    <property type="protein sequence ID" value="ABP44316.1"/>
    <property type="molecule type" value="Genomic_DNA"/>
</dbReference>
<dbReference type="SMR" id="A4T6Y5"/>
<dbReference type="STRING" id="350054.Mflv_1836"/>
<dbReference type="KEGG" id="mgi:Mflv_1836"/>
<dbReference type="eggNOG" id="COG0328">
    <property type="taxonomic scope" value="Bacteria"/>
</dbReference>
<dbReference type="HOGENOM" id="CLU_030894_6_0_11"/>
<dbReference type="OrthoDB" id="7845843at2"/>
<dbReference type="GO" id="GO:0005737">
    <property type="term" value="C:cytoplasm"/>
    <property type="evidence" value="ECO:0007669"/>
    <property type="project" value="UniProtKB-SubCell"/>
</dbReference>
<dbReference type="GO" id="GO:0000287">
    <property type="term" value="F:magnesium ion binding"/>
    <property type="evidence" value="ECO:0007669"/>
    <property type="project" value="UniProtKB-UniRule"/>
</dbReference>
<dbReference type="GO" id="GO:0003676">
    <property type="term" value="F:nucleic acid binding"/>
    <property type="evidence" value="ECO:0007669"/>
    <property type="project" value="InterPro"/>
</dbReference>
<dbReference type="GO" id="GO:0004523">
    <property type="term" value="F:RNA-DNA hybrid ribonuclease activity"/>
    <property type="evidence" value="ECO:0007669"/>
    <property type="project" value="UniProtKB-UniRule"/>
</dbReference>
<dbReference type="GO" id="GO:0043137">
    <property type="term" value="P:DNA replication, removal of RNA primer"/>
    <property type="evidence" value="ECO:0007669"/>
    <property type="project" value="TreeGrafter"/>
</dbReference>
<dbReference type="CDD" id="cd09278">
    <property type="entry name" value="RNase_HI_prokaryote_like"/>
    <property type="match status" value="1"/>
</dbReference>
<dbReference type="Gene3D" id="3.30.420.10">
    <property type="entry name" value="Ribonuclease H-like superfamily/Ribonuclease H"/>
    <property type="match status" value="1"/>
</dbReference>
<dbReference type="HAMAP" id="MF_00042">
    <property type="entry name" value="RNase_H"/>
    <property type="match status" value="1"/>
</dbReference>
<dbReference type="InterPro" id="IPR050092">
    <property type="entry name" value="RNase_H"/>
</dbReference>
<dbReference type="InterPro" id="IPR012337">
    <property type="entry name" value="RNaseH-like_sf"/>
</dbReference>
<dbReference type="InterPro" id="IPR002156">
    <property type="entry name" value="RNaseH_domain"/>
</dbReference>
<dbReference type="InterPro" id="IPR036397">
    <property type="entry name" value="RNaseH_sf"/>
</dbReference>
<dbReference type="InterPro" id="IPR022892">
    <property type="entry name" value="RNaseHI"/>
</dbReference>
<dbReference type="NCBIfam" id="NF001236">
    <property type="entry name" value="PRK00203.1"/>
    <property type="match status" value="1"/>
</dbReference>
<dbReference type="PANTHER" id="PTHR10642">
    <property type="entry name" value="RIBONUCLEASE H1"/>
    <property type="match status" value="1"/>
</dbReference>
<dbReference type="PANTHER" id="PTHR10642:SF26">
    <property type="entry name" value="RIBONUCLEASE H1"/>
    <property type="match status" value="1"/>
</dbReference>
<dbReference type="Pfam" id="PF00075">
    <property type="entry name" value="RNase_H"/>
    <property type="match status" value="1"/>
</dbReference>
<dbReference type="SUPFAM" id="SSF53098">
    <property type="entry name" value="Ribonuclease H-like"/>
    <property type="match status" value="1"/>
</dbReference>
<dbReference type="PROSITE" id="PS50879">
    <property type="entry name" value="RNASE_H_1"/>
    <property type="match status" value="1"/>
</dbReference>
<evidence type="ECO:0000255" key="1">
    <source>
        <dbReference type="HAMAP-Rule" id="MF_00042"/>
    </source>
</evidence>
<evidence type="ECO:0000255" key="2">
    <source>
        <dbReference type="PROSITE-ProRule" id="PRU00408"/>
    </source>
</evidence>
<organism>
    <name type="scientific">Mycolicibacterium gilvum (strain PYR-GCK)</name>
    <name type="common">Mycobacterium gilvum (strain PYR-GCK)</name>
    <dbReference type="NCBI Taxonomy" id="350054"/>
    <lineage>
        <taxon>Bacteria</taxon>
        <taxon>Bacillati</taxon>
        <taxon>Actinomycetota</taxon>
        <taxon>Actinomycetes</taxon>
        <taxon>Mycobacteriales</taxon>
        <taxon>Mycobacteriaceae</taxon>
        <taxon>Mycolicibacterium</taxon>
    </lineage>
</organism>
<name>RNH_MYCGI</name>
<comment type="function">
    <text evidence="1">Endonuclease that specifically degrades the RNA of RNA-DNA hybrids.</text>
</comment>
<comment type="catalytic activity">
    <reaction evidence="1">
        <text>Endonucleolytic cleavage to 5'-phosphomonoester.</text>
        <dbReference type="EC" id="3.1.26.4"/>
    </reaction>
</comment>
<comment type="cofactor">
    <cofactor evidence="1">
        <name>Mg(2+)</name>
        <dbReference type="ChEBI" id="CHEBI:18420"/>
    </cofactor>
    <text evidence="1">Binds 1 Mg(2+) ion per subunit. May bind a second metal ion at a regulatory site, or after substrate binding.</text>
</comment>
<comment type="subunit">
    <text evidence="1">Monomer.</text>
</comment>
<comment type="subcellular location">
    <subcellularLocation>
        <location evidence="1">Cytoplasm</location>
    </subcellularLocation>
</comment>
<comment type="similarity">
    <text evidence="1">Belongs to the RNase H family.</text>
</comment>
<gene>
    <name evidence="1" type="primary">rnhA</name>
    <name type="ordered locus">Mflv_1836</name>
</gene>
<proteinExistence type="inferred from homology"/>
<keyword id="KW-0963">Cytoplasm</keyword>
<keyword id="KW-0255">Endonuclease</keyword>
<keyword id="KW-0378">Hydrolase</keyword>
<keyword id="KW-0460">Magnesium</keyword>
<keyword id="KW-0479">Metal-binding</keyword>
<keyword id="KW-0540">Nuclease</keyword>
<reference key="1">
    <citation type="submission" date="2007-04" db="EMBL/GenBank/DDBJ databases">
        <title>Complete sequence of chromosome of Mycobacterium gilvum PYR-GCK.</title>
        <authorList>
            <consortium name="US DOE Joint Genome Institute"/>
            <person name="Copeland A."/>
            <person name="Lucas S."/>
            <person name="Lapidus A."/>
            <person name="Barry K."/>
            <person name="Detter J.C."/>
            <person name="Glavina del Rio T."/>
            <person name="Hammon N."/>
            <person name="Israni S."/>
            <person name="Dalin E."/>
            <person name="Tice H."/>
            <person name="Pitluck S."/>
            <person name="Chain P."/>
            <person name="Malfatti S."/>
            <person name="Shin M."/>
            <person name="Vergez L."/>
            <person name="Schmutz J."/>
            <person name="Larimer F."/>
            <person name="Land M."/>
            <person name="Hauser L."/>
            <person name="Kyrpides N."/>
            <person name="Mikhailova N."/>
            <person name="Miller C."/>
            <person name="Richardson P."/>
        </authorList>
    </citation>
    <scope>NUCLEOTIDE SEQUENCE [LARGE SCALE GENOMIC DNA]</scope>
    <source>
        <strain>PYR-GCK</strain>
    </source>
</reference>